<comment type="function">
    <text evidence="1">Part of the ABC transporter complex PotFGHI involved in putrescine uptake. Responsible for the translocation of the substrate across the membrane.</text>
</comment>
<comment type="subunit">
    <text evidence="1">The complex is composed of two ATP-binding proteins (PotG), two transmembrane proteins (PotH and PotI) and a solute-binding protein (PotF).</text>
</comment>
<comment type="subcellular location">
    <subcellularLocation>
        <location evidence="1">Cell inner membrane</location>
        <topology evidence="2">Multi-pass membrane protein</topology>
    </subcellularLocation>
</comment>
<comment type="similarity">
    <text evidence="4">Belongs to the binding-protein-dependent transport system permease family. CysTW subfamily.</text>
</comment>
<comment type="sequence caution" evidence="4">
    <conflict type="erroneous initiation">
        <sequence resource="EMBL-CDS" id="AAN79463"/>
    </conflict>
</comment>
<sequence>MNNLPVVRSPWRIVILLLGFTFLYAPMLMLVIYSFNSSKLVTVWAGWSTRWYGELLRDDAMMSAVGLSLTIAACAATAAAILGTIAAVVLVRFGRFRGSNGFAFMITAPLVMPDVITGLSLLLLFVALAHAIGWPADRGMLTIWLAHVTFCTAYVAVVISSRLRELDRSIEEAAMDLGATPLKVFFVITLPMIMPAIISGWLLAFTLSLDDLVIASFVSGPGATTLPMLVFSSVRMGVNPEINALATLILGAVGIVGFIAWYLMARAEKQRIRDIQRARRG</sequence>
<dbReference type="EMBL" id="AE014075">
    <property type="protein sequence ID" value="AAN79463.1"/>
    <property type="status" value="ALT_INIT"/>
    <property type="molecule type" value="Genomic_DNA"/>
</dbReference>
<dbReference type="RefSeq" id="WP_001061658.1">
    <property type="nucleotide sequence ID" value="NZ_CP051263.1"/>
</dbReference>
<dbReference type="SMR" id="P0AFL2"/>
<dbReference type="STRING" id="199310.c0990"/>
<dbReference type="GeneID" id="89520233"/>
<dbReference type="KEGG" id="ecc:c0990"/>
<dbReference type="eggNOG" id="COG1177">
    <property type="taxonomic scope" value="Bacteria"/>
</dbReference>
<dbReference type="HOGENOM" id="CLU_016047_3_0_6"/>
<dbReference type="Proteomes" id="UP000001410">
    <property type="component" value="Chromosome"/>
</dbReference>
<dbReference type="GO" id="GO:0005886">
    <property type="term" value="C:plasma membrane"/>
    <property type="evidence" value="ECO:0007669"/>
    <property type="project" value="UniProtKB-SubCell"/>
</dbReference>
<dbReference type="GO" id="GO:0055085">
    <property type="term" value="P:transmembrane transport"/>
    <property type="evidence" value="ECO:0007669"/>
    <property type="project" value="InterPro"/>
</dbReference>
<dbReference type="CDD" id="cd06261">
    <property type="entry name" value="TM_PBP2"/>
    <property type="match status" value="1"/>
</dbReference>
<dbReference type="FunFam" id="1.10.3720.10:FF:000040">
    <property type="entry name" value="Putrescine ABC transporter, permease protein PotI"/>
    <property type="match status" value="1"/>
</dbReference>
<dbReference type="Gene3D" id="1.10.3720.10">
    <property type="entry name" value="MetI-like"/>
    <property type="match status" value="1"/>
</dbReference>
<dbReference type="InterPro" id="IPR051789">
    <property type="entry name" value="Bact_Polyamine_Transport"/>
</dbReference>
<dbReference type="InterPro" id="IPR000515">
    <property type="entry name" value="MetI-like"/>
</dbReference>
<dbReference type="InterPro" id="IPR035906">
    <property type="entry name" value="MetI-like_sf"/>
</dbReference>
<dbReference type="NCBIfam" id="NF007889">
    <property type="entry name" value="PRK10592.1"/>
    <property type="match status" value="1"/>
</dbReference>
<dbReference type="PANTHER" id="PTHR43848">
    <property type="entry name" value="PUTRESCINE TRANSPORT SYSTEM PERMEASE PROTEIN POTI"/>
    <property type="match status" value="1"/>
</dbReference>
<dbReference type="PANTHER" id="PTHR43848:SF2">
    <property type="entry name" value="PUTRESCINE TRANSPORT SYSTEM PERMEASE PROTEIN POTI"/>
    <property type="match status" value="1"/>
</dbReference>
<dbReference type="Pfam" id="PF00528">
    <property type="entry name" value="BPD_transp_1"/>
    <property type="match status" value="1"/>
</dbReference>
<dbReference type="SUPFAM" id="SSF161098">
    <property type="entry name" value="MetI-like"/>
    <property type="match status" value="1"/>
</dbReference>
<dbReference type="PROSITE" id="PS50928">
    <property type="entry name" value="ABC_TM1"/>
    <property type="match status" value="1"/>
</dbReference>
<feature type="chain" id="PRO_0000060190" description="Putrescine transport system permease protein PotI">
    <location>
        <begin position="1"/>
        <end position="281"/>
    </location>
</feature>
<feature type="topological domain" description="Cytoplasmic" evidence="2">
    <location>
        <begin position="1"/>
        <end position="13"/>
    </location>
</feature>
<feature type="transmembrane region" description="Helical" evidence="3">
    <location>
        <begin position="14"/>
        <end position="33"/>
    </location>
</feature>
<feature type="topological domain" description="Periplasmic" evidence="2">
    <location>
        <begin position="34"/>
        <end position="68"/>
    </location>
</feature>
<feature type="transmembrane region" description="Helical" evidence="3">
    <location>
        <begin position="69"/>
        <end position="88"/>
    </location>
</feature>
<feature type="topological domain" description="Cytoplasmic" evidence="2">
    <location>
        <begin position="89"/>
        <end position="115"/>
    </location>
</feature>
<feature type="transmembrane region" description="Helical" evidence="3">
    <location>
        <begin position="116"/>
        <end position="135"/>
    </location>
</feature>
<feature type="topological domain" description="Periplasmic" evidence="2">
    <location>
        <begin position="136"/>
        <end position="140"/>
    </location>
</feature>
<feature type="transmembrane region" description="Helical" evidence="3">
    <location>
        <begin position="141"/>
        <end position="160"/>
    </location>
</feature>
<feature type="topological domain" description="Cytoplasmic" evidence="2">
    <location>
        <begin position="161"/>
        <end position="186"/>
    </location>
</feature>
<feature type="transmembrane region" description="Helical" evidence="3">
    <location>
        <begin position="187"/>
        <end position="206"/>
    </location>
</feature>
<feature type="topological domain" description="Periplasmic" evidence="2">
    <location>
        <begin position="207"/>
        <end position="243"/>
    </location>
</feature>
<feature type="transmembrane region" description="Helical" evidence="3">
    <location>
        <begin position="244"/>
        <end position="263"/>
    </location>
</feature>
<feature type="topological domain" description="Cytoplasmic" evidence="2">
    <location>
        <begin position="264"/>
        <end position="281"/>
    </location>
</feature>
<feature type="domain" description="ABC transmembrane type-1" evidence="3">
    <location>
        <begin position="65"/>
        <end position="260"/>
    </location>
</feature>
<evidence type="ECO:0000250" key="1">
    <source>
        <dbReference type="UniProtKB" id="P0AFL1"/>
    </source>
</evidence>
<evidence type="ECO:0000255" key="2"/>
<evidence type="ECO:0000255" key="3">
    <source>
        <dbReference type="PROSITE-ProRule" id="PRU00441"/>
    </source>
</evidence>
<evidence type="ECO:0000305" key="4"/>
<protein>
    <recommendedName>
        <fullName evidence="1">Putrescine transport system permease protein PotI</fullName>
    </recommendedName>
</protein>
<accession>P0AFL2</accession>
<accession>P31136</accession>
<gene>
    <name evidence="1" type="primary">potI</name>
    <name type="ordered locus">c0990</name>
</gene>
<reference key="1">
    <citation type="journal article" date="2002" name="Proc. Natl. Acad. Sci. U.S.A.">
        <title>Extensive mosaic structure revealed by the complete genome sequence of uropathogenic Escherichia coli.</title>
        <authorList>
            <person name="Welch R.A."/>
            <person name="Burland V."/>
            <person name="Plunkett G. III"/>
            <person name="Redford P."/>
            <person name="Roesch P."/>
            <person name="Rasko D."/>
            <person name="Buckles E.L."/>
            <person name="Liou S.-R."/>
            <person name="Boutin A."/>
            <person name="Hackett J."/>
            <person name="Stroud D."/>
            <person name="Mayhew G.F."/>
            <person name="Rose D.J."/>
            <person name="Zhou S."/>
            <person name="Schwartz D.C."/>
            <person name="Perna N.T."/>
            <person name="Mobley H.L.T."/>
            <person name="Donnenberg M.S."/>
            <person name="Blattner F.R."/>
        </authorList>
    </citation>
    <scope>NUCLEOTIDE SEQUENCE [LARGE SCALE GENOMIC DNA]</scope>
    <source>
        <strain>CFT073 / ATCC 700928 / UPEC</strain>
    </source>
</reference>
<proteinExistence type="inferred from homology"/>
<organism>
    <name type="scientific">Escherichia coli O6:H1 (strain CFT073 / ATCC 700928 / UPEC)</name>
    <dbReference type="NCBI Taxonomy" id="199310"/>
    <lineage>
        <taxon>Bacteria</taxon>
        <taxon>Pseudomonadati</taxon>
        <taxon>Pseudomonadota</taxon>
        <taxon>Gammaproteobacteria</taxon>
        <taxon>Enterobacterales</taxon>
        <taxon>Enterobacteriaceae</taxon>
        <taxon>Escherichia</taxon>
    </lineage>
</organism>
<keyword id="KW-0997">Cell inner membrane</keyword>
<keyword id="KW-1003">Cell membrane</keyword>
<keyword id="KW-0472">Membrane</keyword>
<keyword id="KW-1185">Reference proteome</keyword>
<keyword id="KW-0812">Transmembrane</keyword>
<keyword id="KW-1133">Transmembrane helix</keyword>
<keyword id="KW-0813">Transport</keyword>
<name>POTI_ECOL6</name>